<feature type="chain" id="PRO_0000273860" description="Large ribosomal subunit protein uL30">
    <location>
        <begin position="1"/>
        <end position="59"/>
    </location>
</feature>
<accession>Q2NQP0</accession>
<protein>
    <recommendedName>
        <fullName evidence="1">Large ribosomal subunit protein uL30</fullName>
    </recommendedName>
    <alternativeName>
        <fullName evidence="2">50S ribosomal protein L30</fullName>
    </alternativeName>
</protein>
<name>RL30_SODGM</name>
<dbReference type="EMBL" id="AP008232">
    <property type="protein sequence ID" value="BAE75535.1"/>
    <property type="molecule type" value="Genomic_DNA"/>
</dbReference>
<dbReference type="RefSeq" id="WP_011412070.1">
    <property type="nucleotide sequence ID" value="NZ_LN854557.1"/>
</dbReference>
<dbReference type="SMR" id="Q2NQP0"/>
<dbReference type="STRING" id="343509.SG2260"/>
<dbReference type="KEGG" id="sgl:SG2260"/>
<dbReference type="eggNOG" id="COG1841">
    <property type="taxonomic scope" value="Bacteria"/>
</dbReference>
<dbReference type="HOGENOM" id="CLU_131047_1_4_6"/>
<dbReference type="OrthoDB" id="9812790at2"/>
<dbReference type="BioCyc" id="SGLO343509:SGP1_RS20750-MONOMER"/>
<dbReference type="Proteomes" id="UP000001932">
    <property type="component" value="Chromosome"/>
</dbReference>
<dbReference type="GO" id="GO:0022625">
    <property type="term" value="C:cytosolic large ribosomal subunit"/>
    <property type="evidence" value="ECO:0007669"/>
    <property type="project" value="TreeGrafter"/>
</dbReference>
<dbReference type="GO" id="GO:0003735">
    <property type="term" value="F:structural constituent of ribosome"/>
    <property type="evidence" value="ECO:0007669"/>
    <property type="project" value="InterPro"/>
</dbReference>
<dbReference type="GO" id="GO:0006412">
    <property type="term" value="P:translation"/>
    <property type="evidence" value="ECO:0007669"/>
    <property type="project" value="UniProtKB-UniRule"/>
</dbReference>
<dbReference type="CDD" id="cd01658">
    <property type="entry name" value="Ribosomal_L30"/>
    <property type="match status" value="1"/>
</dbReference>
<dbReference type="FunFam" id="3.30.1390.20:FF:000001">
    <property type="entry name" value="50S ribosomal protein L30"/>
    <property type="match status" value="1"/>
</dbReference>
<dbReference type="Gene3D" id="3.30.1390.20">
    <property type="entry name" value="Ribosomal protein L30, ferredoxin-like fold domain"/>
    <property type="match status" value="1"/>
</dbReference>
<dbReference type="HAMAP" id="MF_01371_B">
    <property type="entry name" value="Ribosomal_uL30_B"/>
    <property type="match status" value="1"/>
</dbReference>
<dbReference type="InterPro" id="IPR036919">
    <property type="entry name" value="Ribo_uL30_ferredoxin-like_sf"/>
</dbReference>
<dbReference type="InterPro" id="IPR005996">
    <property type="entry name" value="Ribosomal_uL30_bac-type"/>
</dbReference>
<dbReference type="InterPro" id="IPR018038">
    <property type="entry name" value="Ribosomal_uL30_CS"/>
</dbReference>
<dbReference type="InterPro" id="IPR016082">
    <property type="entry name" value="Ribosomal_uL30_ferredoxin-like"/>
</dbReference>
<dbReference type="NCBIfam" id="TIGR01308">
    <property type="entry name" value="rpmD_bact"/>
    <property type="match status" value="1"/>
</dbReference>
<dbReference type="PANTHER" id="PTHR15892:SF2">
    <property type="entry name" value="LARGE RIBOSOMAL SUBUNIT PROTEIN UL30M"/>
    <property type="match status" value="1"/>
</dbReference>
<dbReference type="PANTHER" id="PTHR15892">
    <property type="entry name" value="MITOCHONDRIAL RIBOSOMAL PROTEIN L30"/>
    <property type="match status" value="1"/>
</dbReference>
<dbReference type="Pfam" id="PF00327">
    <property type="entry name" value="Ribosomal_L30"/>
    <property type="match status" value="1"/>
</dbReference>
<dbReference type="PIRSF" id="PIRSF002211">
    <property type="entry name" value="Ribosomal_L30_bac-type"/>
    <property type="match status" value="1"/>
</dbReference>
<dbReference type="SUPFAM" id="SSF55129">
    <property type="entry name" value="Ribosomal protein L30p/L7e"/>
    <property type="match status" value="1"/>
</dbReference>
<dbReference type="PROSITE" id="PS00634">
    <property type="entry name" value="RIBOSOMAL_L30"/>
    <property type="match status" value="1"/>
</dbReference>
<evidence type="ECO:0000255" key="1">
    <source>
        <dbReference type="HAMAP-Rule" id="MF_01371"/>
    </source>
</evidence>
<evidence type="ECO:0000305" key="2"/>
<proteinExistence type="inferred from homology"/>
<organism>
    <name type="scientific">Sodalis glossinidius (strain morsitans)</name>
    <dbReference type="NCBI Taxonomy" id="343509"/>
    <lineage>
        <taxon>Bacteria</taxon>
        <taxon>Pseudomonadati</taxon>
        <taxon>Pseudomonadota</taxon>
        <taxon>Gammaproteobacteria</taxon>
        <taxon>Enterobacterales</taxon>
        <taxon>Bruguierivoracaceae</taxon>
        <taxon>Sodalis</taxon>
    </lineage>
</organism>
<comment type="subunit">
    <text evidence="1">Part of the 50S ribosomal subunit.</text>
</comment>
<comment type="similarity">
    <text evidence="1">Belongs to the universal ribosomal protein uL30 family.</text>
</comment>
<gene>
    <name evidence="1" type="primary">rpmD</name>
    <name type="ordered locus">SG2260</name>
</gene>
<sequence length="59" mass="6574">MAQTIKITQTRSSIGRLPKHKATLVGLGLRRIGHTVEREDTPAVRGMVNLVSYMVKVEE</sequence>
<keyword id="KW-0687">Ribonucleoprotein</keyword>
<keyword id="KW-0689">Ribosomal protein</keyword>
<reference key="1">
    <citation type="journal article" date="2006" name="Genome Res.">
        <title>Massive genome erosion and functional adaptations provide insights into the symbiotic lifestyle of Sodalis glossinidius in the tsetse host.</title>
        <authorList>
            <person name="Toh H."/>
            <person name="Weiss B.L."/>
            <person name="Perkin S.A.H."/>
            <person name="Yamashita A."/>
            <person name="Oshima K."/>
            <person name="Hattori M."/>
            <person name="Aksoy S."/>
        </authorList>
    </citation>
    <scope>NUCLEOTIDE SEQUENCE [LARGE SCALE GENOMIC DNA]</scope>
    <source>
        <strain>morsitans</strain>
    </source>
</reference>